<name>A1KB1_LOXSA</name>
<feature type="chain" id="PRO_0000392784" description="Dermonecrotic toxin LsaSicTox-alphaIB1bi">
    <location>
        <begin position="1" status="less than"/>
        <end position="273"/>
    </location>
</feature>
<feature type="active site" evidence="5">
    <location>
        <position position="5"/>
    </location>
</feature>
<feature type="active site" description="Nucleophile" evidence="5">
    <location>
        <position position="41"/>
    </location>
</feature>
<feature type="binding site" evidence="5">
    <location>
        <position position="25"/>
    </location>
    <ligand>
        <name>Mg(2+)</name>
        <dbReference type="ChEBI" id="CHEBI:18420"/>
    </ligand>
</feature>
<feature type="binding site" evidence="5">
    <location>
        <position position="27"/>
    </location>
    <ligand>
        <name>Mg(2+)</name>
        <dbReference type="ChEBI" id="CHEBI:18420"/>
    </ligand>
</feature>
<feature type="binding site" evidence="5">
    <location>
        <position position="85"/>
    </location>
    <ligand>
        <name>Mg(2+)</name>
        <dbReference type="ChEBI" id="CHEBI:18420"/>
    </ligand>
</feature>
<feature type="disulfide bond" evidence="3">
    <location>
        <begin position="45"/>
        <end position="51"/>
    </location>
</feature>
<feature type="disulfide bond" evidence="3">
    <location>
        <begin position="47"/>
        <end position="190"/>
    </location>
</feature>
<feature type="non-terminal residue">
    <location>
        <position position="1"/>
    </location>
</feature>
<accession>C0JAY2</accession>
<sequence length="273" mass="30583">WIMGHMVNAIAQIDEFVSLGANSIETDVSFDKNANPEYTYHGIPCDCGRTCTKWEYFNTFLGGLRKATTPGDSKYHEKLVLVVFDLKTGSLYDNQAYDAGTKLAKSLLQNYWNKGNNGGRAYIVLSIPNLDHYKLITGFKETLTKEEHPELMDKVGYDFSGNDDIGDVAKAYKKAGVTGHVWQSDGITNCLLRGLDRVRKAVANRDSSNGYINKVYYWTVDKRASTRDALDAGVDGIMTNYPDVIADVLSESAYTAKFRIATYDDNPWETFKN</sequence>
<proteinExistence type="evidence at transcript level"/>
<comment type="function">
    <text evidence="1 3">Dermonecrotic toxins cleave the phosphodiester linkage between the phosphate and headgroup of certain phospholipids (sphingolipid and lysolipid substrates), forming an alcohol (often choline) and a cyclic phosphate (By similarity). This toxin acts on sphingomyelin (SM) (By similarity). It may also act on ceramide phosphoethanolamine (CPE), lysophosphatidylcholine (LPC) and lysophosphatidylethanolamine (LPE), but not on lysophosphatidylserine (LPS), and lysophosphatidylglycerol (LPG) (By similarity). It acts by transphosphatidylation, releasing exclusively cyclic phosphate products as second products (By similarity). Induces dermonecrosis, hemolysis, increased vascular permeability, edema, inflammatory response, and platelet aggregation (By similarity).</text>
</comment>
<comment type="catalytic activity">
    <reaction evidence="1">
        <text>an N-(acyl)-sphingosylphosphocholine = an N-(acyl)-sphingosyl-1,3-cyclic phosphate + choline</text>
        <dbReference type="Rhea" id="RHEA:60652"/>
        <dbReference type="ChEBI" id="CHEBI:15354"/>
        <dbReference type="ChEBI" id="CHEBI:64583"/>
        <dbReference type="ChEBI" id="CHEBI:143892"/>
    </reaction>
</comment>
<comment type="catalytic activity">
    <reaction evidence="1">
        <text>an N-(acyl)-sphingosylphosphoethanolamine = an N-(acyl)-sphingosyl-1,3-cyclic phosphate + ethanolamine</text>
        <dbReference type="Rhea" id="RHEA:60648"/>
        <dbReference type="ChEBI" id="CHEBI:57603"/>
        <dbReference type="ChEBI" id="CHEBI:143891"/>
        <dbReference type="ChEBI" id="CHEBI:143892"/>
    </reaction>
</comment>
<comment type="catalytic activity">
    <reaction evidence="1">
        <text>a 1-acyl-sn-glycero-3-phosphocholine = a 1-acyl-sn-glycero-2,3-cyclic phosphate + choline</text>
        <dbReference type="Rhea" id="RHEA:60700"/>
        <dbReference type="ChEBI" id="CHEBI:15354"/>
        <dbReference type="ChEBI" id="CHEBI:58168"/>
        <dbReference type="ChEBI" id="CHEBI:143947"/>
    </reaction>
</comment>
<comment type="catalytic activity">
    <reaction evidence="1">
        <text>a 1-acyl-sn-glycero-3-phosphoethanolamine = a 1-acyl-sn-glycero-2,3-cyclic phosphate + ethanolamine</text>
        <dbReference type="Rhea" id="RHEA:60704"/>
        <dbReference type="ChEBI" id="CHEBI:57603"/>
        <dbReference type="ChEBI" id="CHEBI:64381"/>
        <dbReference type="ChEBI" id="CHEBI:143947"/>
    </reaction>
</comment>
<comment type="cofactor">
    <cofactor evidence="5">
        <name>Mg(2+)</name>
        <dbReference type="ChEBI" id="CHEBI:18420"/>
    </cofactor>
    <text evidence="5">Binds 1 Mg(2+) ion per subunit.</text>
</comment>
<comment type="subcellular location">
    <subcellularLocation>
        <location evidence="8">Secreted</location>
    </subcellularLocation>
</comment>
<comment type="tissue specificity">
    <text evidence="8">Expressed by the venom gland.</text>
</comment>
<comment type="similarity">
    <text evidence="7">Belongs to the arthropod phospholipase D family. Class II subfamily.</text>
</comment>
<comment type="caution">
    <text evidence="1 2 4">The most common activity assay for dermonecrotic toxins detects enzymatic activity by monitoring choline release from substrate. Liberation of choline from sphingomyelin (SM) or lysophosphatidylcholine (LPC) is commonly assumed to result from substrate hydrolysis, giving either ceramide-1-phosphate (C1P) or lysophosphatidic acid (LPA), respectively, as a second product. However, two studies from Lajoie and colleagues (2013 and 2015) report the observation of exclusive formation of cyclic phosphate products as second products, resulting from intramolecular transphosphatidylation. Cyclic phosphates have vastly different biological properties from their monoester counterparts, and they may be relevant to the pathology of brown spider envenomation.</text>
</comment>
<reference key="1">
    <citation type="journal article" date="2009" name="Mol. Biol. Evol.">
        <title>Molecular evolution, functional variation, and proposed nomenclature of the gene family that includes sphingomyelinase D in sicariid spider venoms.</title>
        <authorList>
            <person name="Binford G.J."/>
            <person name="Bodner M.R."/>
            <person name="Cordes M.H."/>
            <person name="Baldwin K.L."/>
            <person name="Rynerson M.R."/>
            <person name="Burns S.N."/>
            <person name="Zobel-Thropp P.A."/>
        </authorList>
    </citation>
    <scope>NUCLEOTIDE SEQUENCE [MRNA]</scope>
    <scope>NOMENCLATURE</scope>
    <source>
        <tissue>Venom gland</tissue>
    </source>
</reference>
<organism>
    <name type="scientific">Loxosceles sabina</name>
    <name type="common">Tucson recluse spider</name>
    <dbReference type="NCBI Taxonomy" id="571529"/>
    <lineage>
        <taxon>Eukaryota</taxon>
        <taxon>Metazoa</taxon>
        <taxon>Ecdysozoa</taxon>
        <taxon>Arthropoda</taxon>
        <taxon>Chelicerata</taxon>
        <taxon>Arachnida</taxon>
        <taxon>Araneae</taxon>
        <taxon>Araneomorphae</taxon>
        <taxon>Haplogynae</taxon>
        <taxon>Scytodoidea</taxon>
        <taxon>Sicariidae</taxon>
        <taxon>Loxosceles</taxon>
    </lineage>
</organism>
<evidence type="ECO:0000250" key="1">
    <source>
        <dbReference type="UniProtKB" id="A0A0D4WTV1"/>
    </source>
</evidence>
<evidence type="ECO:0000250" key="2">
    <source>
        <dbReference type="UniProtKB" id="A0A0D4WV12"/>
    </source>
</evidence>
<evidence type="ECO:0000250" key="3">
    <source>
        <dbReference type="UniProtKB" id="P0CE80"/>
    </source>
</evidence>
<evidence type="ECO:0000250" key="4">
    <source>
        <dbReference type="UniProtKB" id="Q4ZFU2"/>
    </source>
</evidence>
<evidence type="ECO:0000250" key="5">
    <source>
        <dbReference type="UniProtKB" id="Q8I914"/>
    </source>
</evidence>
<evidence type="ECO:0000303" key="6">
    <source>
    </source>
</evidence>
<evidence type="ECO:0000305" key="7"/>
<evidence type="ECO:0000305" key="8">
    <source>
    </source>
</evidence>
<dbReference type="EC" id="4.6.1.-" evidence="4"/>
<dbReference type="EMBL" id="FJ171417">
    <property type="protein sequence ID" value="ACN48913.1"/>
    <property type="molecule type" value="mRNA"/>
</dbReference>
<dbReference type="SMR" id="C0JAY2"/>
<dbReference type="GO" id="GO:0005576">
    <property type="term" value="C:extracellular region"/>
    <property type="evidence" value="ECO:0007669"/>
    <property type="project" value="UniProtKB-SubCell"/>
</dbReference>
<dbReference type="GO" id="GO:0016829">
    <property type="term" value="F:lyase activity"/>
    <property type="evidence" value="ECO:0007669"/>
    <property type="project" value="UniProtKB-KW"/>
</dbReference>
<dbReference type="GO" id="GO:0046872">
    <property type="term" value="F:metal ion binding"/>
    <property type="evidence" value="ECO:0007669"/>
    <property type="project" value="UniProtKB-KW"/>
</dbReference>
<dbReference type="GO" id="GO:0008081">
    <property type="term" value="F:phosphoric diester hydrolase activity"/>
    <property type="evidence" value="ECO:0007669"/>
    <property type="project" value="InterPro"/>
</dbReference>
<dbReference type="GO" id="GO:0090729">
    <property type="term" value="F:toxin activity"/>
    <property type="evidence" value="ECO:0007669"/>
    <property type="project" value="UniProtKB-KW"/>
</dbReference>
<dbReference type="GO" id="GO:0031640">
    <property type="term" value="P:killing of cells of another organism"/>
    <property type="evidence" value="ECO:0007669"/>
    <property type="project" value="UniProtKB-KW"/>
</dbReference>
<dbReference type="GO" id="GO:0016042">
    <property type="term" value="P:lipid catabolic process"/>
    <property type="evidence" value="ECO:0007669"/>
    <property type="project" value="UniProtKB-KW"/>
</dbReference>
<dbReference type="CDD" id="cd08576">
    <property type="entry name" value="GDPD_like_SMaseD_PLD"/>
    <property type="match status" value="1"/>
</dbReference>
<dbReference type="Gene3D" id="3.20.20.190">
    <property type="entry name" value="Phosphatidylinositol (PI) phosphodiesterase"/>
    <property type="match status" value="1"/>
</dbReference>
<dbReference type="InterPro" id="IPR017946">
    <property type="entry name" value="PLC-like_Pdiesterase_TIM-brl"/>
</dbReference>
<dbReference type="Pfam" id="PF13653">
    <property type="entry name" value="GDPD_2"/>
    <property type="match status" value="1"/>
</dbReference>
<dbReference type="SUPFAM" id="SSF51695">
    <property type="entry name" value="PLC-like phosphodiesterases"/>
    <property type="match status" value="1"/>
</dbReference>
<keyword id="KW-0204">Cytolysis</keyword>
<keyword id="KW-1061">Dermonecrotic toxin</keyword>
<keyword id="KW-1015">Disulfide bond</keyword>
<keyword id="KW-0354">Hemolysis</keyword>
<keyword id="KW-0442">Lipid degradation</keyword>
<keyword id="KW-0443">Lipid metabolism</keyword>
<keyword id="KW-0456">Lyase</keyword>
<keyword id="KW-0460">Magnesium</keyword>
<keyword id="KW-0479">Metal-binding</keyword>
<keyword id="KW-0964">Secreted</keyword>
<keyword id="KW-0800">Toxin</keyword>
<protein>
    <recommendedName>
        <fullName evidence="6">Dermonecrotic toxin LsaSicTox-alphaIB1bi</fullName>
        <ecNumber evidence="4">4.6.1.-</ecNumber>
    </recommendedName>
    <alternativeName>
        <fullName>Phospholipase D</fullName>
        <shortName>PLD</shortName>
    </alternativeName>
    <alternativeName>
        <fullName>Sphingomyelin phosphodiesterase D</fullName>
        <shortName>SMD</shortName>
        <shortName>SMase D</shortName>
        <shortName>Sphingomyelinase D</shortName>
    </alternativeName>
</protein>